<protein>
    <recommendedName>
        <fullName evidence="1">Bacteriohemerythrin</fullName>
    </recommendedName>
</protein>
<feature type="chain" id="PRO_1000017980" description="Bacteriohemerythrin">
    <location>
        <begin position="1"/>
        <end position="153"/>
    </location>
</feature>
<feature type="binding site" evidence="1">
    <location>
        <position position="21"/>
    </location>
    <ligand>
        <name>Fe cation</name>
        <dbReference type="ChEBI" id="CHEBI:24875"/>
        <label>1</label>
    </ligand>
</feature>
<feature type="binding site" evidence="1">
    <location>
        <position position="57"/>
    </location>
    <ligand>
        <name>Fe cation</name>
        <dbReference type="ChEBI" id="CHEBI:24875"/>
        <label>1</label>
    </ligand>
</feature>
<feature type="binding site" evidence="1">
    <location>
        <position position="61"/>
    </location>
    <ligand>
        <name>Fe cation</name>
        <dbReference type="ChEBI" id="CHEBI:24875"/>
        <label>1</label>
    </ligand>
</feature>
<feature type="binding site" evidence="1">
    <location>
        <position position="61"/>
    </location>
    <ligand>
        <name>Fe cation</name>
        <dbReference type="ChEBI" id="CHEBI:24875"/>
        <label>2</label>
    </ligand>
</feature>
<feature type="binding site" evidence="1">
    <location>
        <position position="76"/>
    </location>
    <ligand>
        <name>Fe cation</name>
        <dbReference type="ChEBI" id="CHEBI:24875"/>
        <label>2</label>
    </ligand>
</feature>
<feature type="binding site" evidence="1">
    <location>
        <position position="80"/>
    </location>
    <ligand>
        <name>Fe cation</name>
        <dbReference type="ChEBI" id="CHEBI:24875"/>
        <label>2</label>
    </ligand>
</feature>
<feature type="binding site" evidence="1">
    <location>
        <position position="115"/>
    </location>
    <ligand>
        <name>Fe cation</name>
        <dbReference type="ChEBI" id="CHEBI:24875"/>
        <label>2</label>
    </ligand>
</feature>
<feature type="binding site" evidence="1">
    <location>
        <position position="120"/>
    </location>
    <ligand>
        <name>Fe cation</name>
        <dbReference type="ChEBI" id="CHEBI:24875"/>
        <label>1</label>
    </ligand>
</feature>
<feature type="binding site" evidence="1">
    <location>
        <position position="120"/>
    </location>
    <ligand>
        <name>Fe cation</name>
        <dbReference type="ChEBI" id="CHEBI:24875"/>
        <label>2</label>
    </ligand>
</feature>
<name>HEMTB_PSEP7</name>
<dbReference type="EMBL" id="CP000744">
    <property type="protein sequence ID" value="ABR80871.1"/>
    <property type="molecule type" value="Genomic_DNA"/>
</dbReference>
<dbReference type="RefSeq" id="WP_003149355.1">
    <property type="nucleotide sequence ID" value="NC_009656.1"/>
</dbReference>
<dbReference type="SMR" id="A6V7B8"/>
<dbReference type="GeneID" id="77221705"/>
<dbReference type="KEGG" id="pap:PSPA7_3599"/>
<dbReference type="HOGENOM" id="CLU_086902_2_1_6"/>
<dbReference type="Proteomes" id="UP000001582">
    <property type="component" value="Chromosome"/>
</dbReference>
<dbReference type="GO" id="GO:0005506">
    <property type="term" value="F:iron ion binding"/>
    <property type="evidence" value="ECO:0007669"/>
    <property type="project" value="UniProtKB-UniRule"/>
</dbReference>
<dbReference type="GO" id="GO:0005344">
    <property type="term" value="F:oxygen carrier activity"/>
    <property type="evidence" value="ECO:0007669"/>
    <property type="project" value="UniProtKB-UniRule"/>
</dbReference>
<dbReference type="CDD" id="cd12107">
    <property type="entry name" value="Hemerythrin"/>
    <property type="match status" value="1"/>
</dbReference>
<dbReference type="Gene3D" id="1.20.120.50">
    <property type="entry name" value="Hemerythrin-like"/>
    <property type="match status" value="1"/>
</dbReference>
<dbReference type="HAMAP" id="MF_00556">
    <property type="entry name" value="Hemerythrin"/>
    <property type="match status" value="1"/>
</dbReference>
<dbReference type="InterPro" id="IPR023504">
    <property type="entry name" value="Bacteriohemerythrin-like"/>
</dbReference>
<dbReference type="InterPro" id="IPR016131">
    <property type="entry name" value="Haemerythrin_Fe_BS"/>
</dbReference>
<dbReference type="InterPro" id="IPR050669">
    <property type="entry name" value="Hemerythrin"/>
</dbReference>
<dbReference type="InterPro" id="IPR012312">
    <property type="entry name" value="Hemerythrin-like"/>
</dbReference>
<dbReference type="InterPro" id="IPR035938">
    <property type="entry name" value="Hemerythrin-like_sf"/>
</dbReference>
<dbReference type="InterPro" id="IPR012827">
    <property type="entry name" value="Hemerythrin_metal-bd"/>
</dbReference>
<dbReference type="NCBIfam" id="NF033749">
    <property type="entry name" value="bact_hemeryth"/>
    <property type="match status" value="1"/>
</dbReference>
<dbReference type="NCBIfam" id="TIGR02481">
    <property type="entry name" value="hemeryth_dom"/>
    <property type="match status" value="1"/>
</dbReference>
<dbReference type="NCBIfam" id="NF002007">
    <property type="entry name" value="PRK00808.1"/>
    <property type="match status" value="1"/>
</dbReference>
<dbReference type="PANTHER" id="PTHR37164">
    <property type="entry name" value="BACTERIOHEMERYTHRIN"/>
    <property type="match status" value="1"/>
</dbReference>
<dbReference type="PANTHER" id="PTHR37164:SF1">
    <property type="entry name" value="BACTERIOHEMERYTHRIN"/>
    <property type="match status" value="1"/>
</dbReference>
<dbReference type="Pfam" id="PF01814">
    <property type="entry name" value="Hemerythrin"/>
    <property type="match status" value="1"/>
</dbReference>
<dbReference type="SUPFAM" id="SSF47188">
    <property type="entry name" value="Hemerythrin-like"/>
    <property type="match status" value="1"/>
</dbReference>
<dbReference type="PROSITE" id="PS00550">
    <property type="entry name" value="HEMERYTHRINS"/>
    <property type="match status" value="1"/>
</dbReference>
<sequence length="153" mass="17829">MAHLVWQDDLNTGIQVIDNQHKRIVEMINLLHDAQQGKEHAAIAEVIEELVDYTLSHFAFEETLMEDAGYQFSRAHKKIHELFIRRVSEYRVRFQAGEDVGDELKGLLSRWLFNHIRNDDAGYVDAVRHSMSELVKDKSEGGWLSRSMKRFFG</sequence>
<keyword id="KW-0408">Iron</keyword>
<keyword id="KW-0479">Metal-binding</keyword>
<keyword id="KW-0561">Oxygen transport</keyword>
<keyword id="KW-0813">Transport</keyword>
<reference key="1">
    <citation type="submission" date="2007-06" db="EMBL/GenBank/DDBJ databases">
        <authorList>
            <person name="Dodson R.J."/>
            <person name="Harkins D."/>
            <person name="Paulsen I.T."/>
        </authorList>
    </citation>
    <scope>NUCLEOTIDE SEQUENCE [LARGE SCALE GENOMIC DNA]</scope>
    <source>
        <strain>DSM 24068 / PA7</strain>
    </source>
</reference>
<accession>A6V7B8</accession>
<proteinExistence type="inferred from homology"/>
<gene>
    <name type="ordered locus">PSPA7_3599</name>
</gene>
<organism>
    <name type="scientific">Pseudomonas paraeruginosa (strain DSM 24068 / PA7)</name>
    <name type="common">Pseudomonas aeruginosa (strain PA7)</name>
    <dbReference type="NCBI Taxonomy" id="381754"/>
    <lineage>
        <taxon>Bacteria</taxon>
        <taxon>Pseudomonadati</taxon>
        <taxon>Pseudomonadota</taxon>
        <taxon>Gammaproteobacteria</taxon>
        <taxon>Pseudomonadales</taxon>
        <taxon>Pseudomonadaceae</taxon>
        <taxon>Pseudomonas</taxon>
        <taxon>Pseudomonas paraeruginosa</taxon>
    </lineage>
</organism>
<evidence type="ECO:0000255" key="1">
    <source>
        <dbReference type="HAMAP-Rule" id="MF_00556"/>
    </source>
</evidence>
<comment type="function">
    <text evidence="1">Oxygen-binding protein. May be involved in a storage mechanism or for delivery to oxygen-requiring enzymes. The oxygen-binding site contains two iron atoms.</text>
</comment>
<comment type="subunit">
    <text evidence="1">Monomer.</text>
</comment>
<comment type="similarity">
    <text evidence="1">Belongs to the hemerythrin family.</text>
</comment>